<comment type="catalytic activity">
    <reaction evidence="1">
        <text>2-O-(alpha-D-mannosyl)-3-phosphoglycerate + H2O = (2R)-2-O-(alpha-D-mannosyl)-glycerate + phosphate</text>
        <dbReference type="Rhea" id="RHEA:19309"/>
        <dbReference type="ChEBI" id="CHEBI:15377"/>
        <dbReference type="ChEBI" id="CHEBI:43474"/>
        <dbReference type="ChEBI" id="CHEBI:57541"/>
        <dbReference type="ChEBI" id="CHEBI:57744"/>
        <dbReference type="EC" id="3.1.3.70"/>
    </reaction>
</comment>
<comment type="cofactor">
    <cofactor evidence="1">
        <name>Mg(2+)</name>
        <dbReference type="ChEBI" id="CHEBI:18420"/>
    </cofactor>
</comment>
<comment type="subcellular location">
    <subcellularLocation>
        <location evidence="1">Cytoplasm</location>
    </subcellularLocation>
</comment>
<comment type="similarity">
    <text evidence="1">Belongs to the HAD-like hydrolase superfamily. MPGP family.</text>
</comment>
<keyword id="KW-0963">Cytoplasm</keyword>
<keyword id="KW-0378">Hydrolase</keyword>
<keyword id="KW-0460">Magnesium</keyword>
<keyword id="KW-0479">Metal-binding</keyword>
<feature type="chain" id="PRO_0000273961" description="Mannosyl-3-phosphoglycerate phosphatase">
    <location>
        <begin position="1"/>
        <end position="271"/>
    </location>
</feature>
<feature type="active site" description="Nucleophile" evidence="1">
    <location>
        <position position="13"/>
    </location>
</feature>
<feature type="binding site" evidence="1">
    <location>
        <position position="13"/>
    </location>
    <ligand>
        <name>Mg(2+)</name>
        <dbReference type="ChEBI" id="CHEBI:18420"/>
    </ligand>
</feature>
<feature type="binding site" evidence="1">
    <location>
        <position position="15"/>
    </location>
    <ligand>
        <name>Mg(2+)</name>
        <dbReference type="ChEBI" id="CHEBI:18420"/>
    </ligand>
</feature>
<feature type="binding site" evidence="1">
    <location>
        <position position="214"/>
    </location>
    <ligand>
        <name>Mg(2+)</name>
        <dbReference type="ChEBI" id="CHEBI:18420"/>
    </ligand>
</feature>
<protein>
    <recommendedName>
        <fullName evidence="1">Mannosyl-3-phosphoglycerate phosphatase</fullName>
        <shortName evidence="1">MPGP</shortName>
        <ecNumber evidence="1">3.1.3.70</ecNumber>
    </recommendedName>
</protein>
<accession>Q322Q3</accession>
<gene>
    <name type="primary">yedP</name>
    <name type="ordered locus">SBO_1053</name>
</gene>
<evidence type="ECO:0000255" key="1">
    <source>
        <dbReference type="HAMAP-Rule" id="MF_00617"/>
    </source>
</evidence>
<organism>
    <name type="scientific">Shigella boydii serotype 4 (strain Sb227)</name>
    <dbReference type="NCBI Taxonomy" id="300268"/>
    <lineage>
        <taxon>Bacteria</taxon>
        <taxon>Pseudomonadati</taxon>
        <taxon>Pseudomonadota</taxon>
        <taxon>Gammaproteobacteria</taxon>
        <taxon>Enterobacterales</taxon>
        <taxon>Enterobacteriaceae</taxon>
        <taxon>Shigella</taxon>
    </lineage>
</organism>
<proteinExistence type="inferred from homology"/>
<sequence>MFSIQQPLLVFSDLDGTLLDSHSYDWQPAAPWLSRLREANVPVILCSSKTSAEMLYLQKTLGLQGVPLIAENGAVIQLAEQWQDIDGFPRIISGISHGEISQVLNTLREKEHFKFTTFDDVDDATIAEWTGLSRSQAALTQLHEASVTLIWRDSDERMAQFTARLNELGLQFMQGARFWHVLDASAGKDQAANWIIATYQQLSGKRPTTLGLGDGPNDAPLLEVMDYAVIVKGLNREGVHLHDEDPARVWRTQREGPEGWREGLDHFFSAR</sequence>
<name>MPGP_SHIBS</name>
<reference key="1">
    <citation type="journal article" date="2005" name="Nucleic Acids Res.">
        <title>Genome dynamics and diversity of Shigella species, the etiologic agents of bacillary dysentery.</title>
        <authorList>
            <person name="Yang F."/>
            <person name="Yang J."/>
            <person name="Zhang X."/>
            <person name="Chen L."/>
            <person name="Jiang Y."/>
            <person name="Yan Y."/>
            <person name="Tang X."/>
            <person name="Wang J."/>
            <person name="Xiong Z."/>
            <person name="Dong J."/>
            <person name="Xue Y."/>
            <person name="Zhu Y."/>
            <person name="Xu X."/>
            <person name="Sun L."/>
            <person name="Chen S."/>
            <person name="Nie H."/>
            <person name="Peng J."/>
            <person name="Xu J."/>
            <person name="Wang Y."/>
            <person name="Yuan Z."/>
            <person name="Wen Y."/>
            <person name="Yao Z."/>
            <person name="Shen Y."/>
            <person name="Qiang B."/>
            <person name="Hou Y."/>
            <person name="Yu J."/>
            <person name="Jin Q."/>
        </authorList>
    </citation>
    <scope>NUCLEOTIDE SEQUENCE [LARGE SCALE GENOMIC DNA]</scope>
    <source>
        <strain>Sb227</strain>
    </source>
</reference>
<dbReference type="EC" id="3.1.3.70" evidence="1"/>
<dbReference type="EMBL" id="CP000036">
    <property type="protein sequence ID" value="ABB65705.1"/>
    <property type="molecule type" value="Genomic_DNA"/>
</dbReference>
<dbReference type="RefSeq" id="WP_000491513.1">
    <property type="nucleotide sequence ID" value="NC_007613.1"/>
</dbReference>
<dbReference type="SMR" id="Q322Q3"/>
<dbReference type="KEGG" id="sbo:SBO_1053"/>
<dbReference type="HOGENOM" id="CLU_063016_1_0_6"/>
<dbReference type="Proteomes" id="UP000007067">
    <property type="component" value="Chromosome"/>
</dbReference>
<dbReference type="GO" id="GO:0005829">
    <property type="term" value="C:cytosol"/>
    <property type="evidence" value="ECO:0007669"/>
    <property type="project" value="TreeGrafter"/>
</dbReference>
<dbReference type="GO" id="GO:0000287">
    <property type="term" value="F:magnesium ion binding"/>
    <property type="evidence" value="ECO:0007669"/>
    <property type="project" value="TreeGrafter"/>
</dbReference>
<dbReference type="GO" id="GO:0050531">
    <property type="term" value="F:mannosyl-3-phosphoglycerate phosphatase activity"/>
    <property type="evidence" value="ECO:0007669"/>
    <property type="project" value="UniProtKB-UniRule"/>
</dbReference>
<dbReference type="GO" id="GO:0051479">
    <property type="term" value="P:mannosylglycerate biosynthetic process"/>
    <property type="evidence" value="ECO:0007669"/>
    <property type="project" value="InterPro"/>
</dbReference>
<dbReference type="CDD" id="cd07507">
    <property type="entry name" value="HAD_Pase"/>
    <property type="match status" value="1"/>
</dbReference>
<dbReference type="Gene3D" id="3.40.50.1000">
    <property type="entry name" value="HAD superfamily/HAD-like"/>
    <property type="match status" value="1"/>
</dbReference>
<dbReference type="Gene3D" id="3.30.980.20">
    <property type="entry name" value="Putative mannosyl-3-phosphoglycerate phosphatase, domain 2"/>
    <property type="match status" value="1"/>
</dbReference>
<dbReference type="HAMAP" id="MF_00617">
    <property type="entry name" value="MPGP_rel"/>
    <property type="match status" value="1"/>
</dbReference>
<dbReference type="InterPro" id="IPR036412">
    <property type="entry name" value="HAD-like_sf"/>
</dbReference>
<dbReference type="InterPro" id="IPR006381">
    <property type="entry name" value="HAD-SF-IIB-MPGP"/>
</dbReference>
<dbReference type="InterPro" id="IPR006379">
    <property type="entry name" value="HAD-SF_hydro_IIB"/>
</dbReference>
<dbReference type="InterPro" id="IPR023214">
    <property type="entry name" value="HAD_sf"/>
</dbReference>
<dbReference type="InterPro" id="IPR012815">
    <property type="entry name" value="MPG_Pase"/>
</dbReference>
<dbReference type="NCBIfam" id="TIGR01484">
    <property type="entry name" value="HAD-SF-IIB"/>
    <property type="match status" value="1"/>
</dbReference>
<dbReference type="NCBIfam" id="TIGR01486">
    <property type="entry name" value="HAD-SF-IIB-MPGP"/>
    <property type="match status" value="1"/>
</dbReference>
<dbReference type="NCBIfam" id="TIGR02463">
    <property type="entry name" value="MPGP_rel"/>
    <property type="match status" value="1"/>
</dbReference>
<dbReference type="NCBIfam" id="NF002976">
    <property type="entry name" value="PRK03669.1"/>
    <property type="match status" value="1"/>
</dbReference>
<dbReference type="PANTHER" id="PTHR10000:SF8">
    <property type="entry name" value="HAD SUPERFAMILY HYDROLASE-LIKE, TYPE 3"/>
    <property type="match status" value="1"/>
</dbReference>
<dbReference type="PANTHER" id="PTHR10000">
    <property type="entry name" value="PHOSPHOSERINE PHOSPHATASE"/>
    <property type="match status" value="1"/>
</dbReference>
<dbReference type="Pfam" id="PF08282">
    <property type="entry name" value="Hydrolase_3"/>
    <property type="match status" value="1"/>
</dbReference>
<dbReference type="SFLD" id="SFLDG01142">
    <property type="entry name" value="C2.B.2:_Mannosyl-3-phosphoglyc"/>
    <property type="match status" value="1"/>
</dbReference>
<dbReference type="SFLD" id="SFLDG01140">
    <property type="entry name" value="C2.B:_Phosphomannomutase_and_P"/>
    <property type="match status" value="1"/>
</dbReference>
<dbReference type="SUPFAM" id="SSF56784">
    <property type="entry name" value="HAD-like"/>
    <property type="match status" value="1"/>
</dbReference>